<gene>
    <name evidence="1" type="primary">hslO</name>
    <name type="ordered locus">SZO_18350</name>
</gene>
<organism>
    <name type="scientific">Streptococcus equi subsp. zooepidemicus (strain H70)</name>
    <dbReference type="NCBI Taxonomy" id="553483"/>
    <lineage>
        <taxon>Bacteria</taxon>
        <taxon>Bacillati</taxon>
        <taxon>Bacillota</taxon>
        <taxon>Bacilli</taxon>
        <taxon>Lactobacillales</taxon>
        <taxon>Streptococcaceae</taxon>
        <taxon>Streptococcus</taxon>
    </lineage>
</organism>
<name>HSLO_STRS7</name>
<keyword id="KW-0143">Chaperone</keyword>
<keyword id="KW-0963">Cytoplasm</keyword>
<keyword id="KW-1015">Disulfide bond</keyword>
<keyword id="KW-0676">Redox-active center</keyword>
<keyword id="KW-0346">Stress response</keyword>
<keyword id="KW-0862">Zinc</keyword>
<reference key="1">
    <citation type="journal article" date="2009" name="PLoS Pathog.">
        <title>Genomic evidence for the evolution of Streptococcus equi: host restriction, increased virulence, and genetic exchange with human pathogens.</title>
        <authorList>
            <person name="Holden M.T.G."/>
            <person name="Heather Z."/>
            <person name="Paillot R."/>
            <person name="Steward K.F."/>
            <person name="Webb K."/>
            <person name="Ainslie F."/>
            <person name="Jourdan T."/>
            <person name="Bason N.C."/>
            <person name="Holroyd N.E."/>
            <person name="Mungall K."/>
            <person name="Quail M.A."/>
            <person name="Sanders M."/>
            <person name="Simmonds M."/>
            <person name="Willey D."/>
            <person name="Brooks K."/>
            <person name="Aanensen D.M."/>
            <person name="Spratt B.G."/>
            <person name="Jolley K.A."/>
            <person name="Maiden M.C.J."/>
            <person name="Kehoe M."/>
            <person name="Chanter N."/>
            <person name="Bentley S.D."/>
            <person name="Robinson C."/>
            <person name="Maskell D.J."/>
            <person name="Parkhill J."/>
            <person name="Waller A.S."/>
        </authorList>
    </citation>
    <scope>NUCLEOTIDE SEQUENCE [LARGE SCALE GENOMIC DNA]</scope>
    <source>
        <strain>H70</strain>
    </source>
</reference>
<sequence>MDKLIKTISASGAFRAYVLDCTETVRYAQERHHTLSSSTVALGRTLIANQILAANQKGDSKVTVKVIGDSSFGHIISVADTKGHVKGYIQNPGVDIKKTATGEVLVGPFMGQGHFVTITDYGTGNPYTSTTPLITGEIGEDLAYYLTESEQTPSAVGLNVLLDQEDKVKVAGGFMLQVLPGASDEEISHYEKRIQEMPAISTLLASENHIDALLAAIYGEEPYKRLAEEQLSFQCDCSKERFASALMNLPTADLQAMRDEDQGAEIVCQFCGIKYQFTEADLEVLINDKA</sequence>
<evidence type="ECO:0000255" key="1">
    <source>
        <dbReference type="HAMAP-Rule" id="MF_00117"/>
    </source>
</evidence>
<dbReference type="EMBL" id="FM204884">
    <property type="protein sequence ID" value="CAX00742.1"/>
    <property type="molecule type" value="Genomic_DNA"/>
</dbReference>
<dbReference type="SMR" id="C0MFZ1"/>
<dbReference type="KEGG" id="seq:SZO_18350"/>
<dbReference type="PATRIC" id="fig|40041.11.peg.1967"/>
<dbReference type="eggNOG" id="COG1281">
    <property type="taxonomic scope" value="Bacteria"/>
</dbReference>
<dbReference type="HOGENOM" id="CLU_054493_1_0_9"/>
<dbReference type="Proteomes" id="UP000001368">
    <property type="component" value="Chromosome"/>
</dbReference>
<dbReference type="GO" id="GO:0005737">
    <property type="term" value="C:cytoplasm"/>
    <property type="evidence" value="ECO:0007669"/>
    <property type="project" value="UniProtKB-SubCell"/>
</dbReference>
<dbReference type="GO" id="GO:0044183">
    <property type="term" value="F:protein folding chaperone"/>
    <property type="evidence" value="ECO:0007669"/>
    <property type="project" value="TreeGrafter"/>
</dbReference>
<dbReference type="GO" id="GO:0051082">
    <property type="term" value="F:unfolded protein binding"/>
    <property type="evidence" value="ECO:0007669"/>
    <property type="project" value="UniProtKB-UniRule"/>
</dbReference>
<dbReference type="GO" id="GO:0042026">
    <property type="term" value="P:protein refolding"/>
    <property type="evidence" value="ECO:0007669"/>
    <property type="project" value="TreeGrafter"/>
</dbReference>
<dbReference type="CDD" id="cd00498">
    <property type="entry name" value="Hsp33"/>
    <property type="match status" value="1"/>
</dbReference>
<dbReference type="Gene3D" id="3.55.30.10">
    <property type="entry name" value="Hsp33 domain"/>
    <property type="match status" value="1"/>
</dbReference>
<dbReference type="Gene3D" id="3.90.1280.10">
    <property type="entry name" value="HSP33 redox switch-like"/>
    <property type="match status" value="1"/>
</dbReference>
<dbReference type="HAMAP" id="MF_00117">
    <property type="entry name" value="HslO"/>
    <property type="match status" value="1"/>
</dbReference>
<dbReference type="InterPro" id="IPR000397">
    <property type="entry name" value="Heat_shock_Hsp33"/>
</dbReference>
<dbReference type="InterPro" id="IPR016154">
    <property type="entry name" value="Heat_shock_Hsp33_C"/>
</dbReference>
<dbReference type="InterPro" id="IPR016153">
    <property type="entry name" value="Heat_shock_Hsp33_N"/>
</dbReference>
<dbReference type="NCBIfam" id="NF001033">
    <property type="entry name" value="PRK00114.1"/>
    <property type="match status" value="1"/>
</dbReference>
<dbReference type="PANTHER" id="PTHR30111">
    <property type="entry name" value="33 KDA CHAPERONIN"/>
    <property type="match status" value="1"/>
</dbReference>
<dbReference type="PANTHER" id="PTHR30111:SF1">
    <property type="entry name" value="33 KDA CHAPERONIN"/>
    <property type="match status" value="1"/>
</dbReference>
<dbReference type="Pfam" id="PF01430">
    <property type="entry name" value="HSP33"/>
    <property type="match status" value="1"/>
</dbReference>
<dbReference type="PIRSF" id="PIRSF005261">
    <property type="entry name" value="Heat_shock_Hsp33"/>
    <property type="match status" value="1"/>
</dbReference>
<dbReference type="SUPFAM" id="SSF64397">
    <property type="entry name" value="Hsp33 domain"/>
    <property type="match status" value="1"/>
</dbReference>
<dbReference type="SUPFAM" id="SSF118352">
    <property type="entry name" value="HSP33 redox switch-like"/>
    <property type="match status" value="1"/>
</dbReference>
<protein>
    <recommendedName>
        <fullName evidence="1">33 kDa chaperonin</fullName>
    </recommendedName>
    <alternativeName>
        <fullName evidence="1">Heat shock protein 33 homolog</fullName>
        <shortName evidence="1">HSP33</shortName>
    </alternativeName>
</protein>
<feature type="chain" id="PRO_1000203002" description="33 kDa chaperonin">
    <location>
        <begin position="1"/>
        <end position="290"/>
    </location>
</feature>
<feature type="disulfide bond" description="Redox-active" evidence="1">
    <location>
        <begin position="235"/>
        <end position="237"/>
    </location>
</feature>
<feature type="disulfide bond" description="Redox-active" evidence="1">
    <location>
        <begin position="268"/>
        <end position="271"/>
    </location>
</feature>
<proteinExistence type="inferred from homology"/>
<comment type="function">
    <text evidence="1">Redox regulated molecular chaperone. Protects both thermally unfolding and oxidatively damaged proteins from irreversible aggregation. Plays an important role in the bacterial defense system toward oxidative stress.</text>
</comment>
<comment type="subcellular location">
    <subcellularLocation>
        <location evidence="1">Cytoplasm</location>
    </subcellularLocation>
</comment>
<comment type="PTM">
    <text evidence="1">Under oxidizing conditions two disulfide bonds are formed involving the reactive cysteines. Under reducing conditions zinc is bound to the reactive cysteines and the protein is inactive.</text>
</comment>
<comment type="similarity">
    <text evidence="1">Belongs to the HSP33 family.</text>
</comment>
<accession>C0MFZ1</accession>